<sequence length="256" mass="27383">MASGRPEELWEAVVGAAERFRARTGTELVLLTAAPPPPPRPGPCAYAAHGRGALAEAARRCLHDIALAHRAATAARPPAPPPAPQPPSPTPSPPRPTLAREDNEEDEDEPTETETSGEQLGISDNGGLFVMDEDATLQDLPPFCESDPESTDDGSLSEETPAGPPTCSVPPASALPTQQYAKSLPVSVPVWGFKEKRTEARSSDEENGPPSSPDLDRIAASMRALVLREAEDTQVFGDLPRPRLNTSDFQKLKRKY</sequence>
<evidence type="ECO:0000250" key="1">
    <source>
        <dbReference type="UniProtKB" id="Q9D1F4"/>
    </source>
</evidence>
<evidence type="ECO:0000256" key="2">
    <source>
        <dbReference type="SAM" id="MobiDB-lite"/>
    </source>
</evidence>
<evidence type="ECO:0000269" key="3">
    <source>
    </source>
</evidence>
<evidence type="ECO:0000269" key="4">
    <source>
    </source>
</evidence>
<evidence type="ECO:0000269" key="5">
    <source>
    </source>
</evidence>
<evidence type="ECO:0000269" key="6">
    <source>
    </source>
</evidence>
<evidence type="ECO:0000269" key="7">
    <source>
    </source>
</evidence>
<evidence type="ECO:0000269" key="8">
    <source>
    </source>
</evidence>
<evidence type="ECO:0000269" key="9">
    <source>
    </source>
</evidence>
<evidence type="ECO:0000269" key="10">
    <source>
    </source>
</evidence>
<evidence type="ECO:0000269" key="11">
    <source>
    </source>
</evidence>
<evidence type="ECO:0000269" key="12">
    <source>
    </source>
</evidence>
<evidence type="ECO:0000269" key="13">
    <source>
    </source>
</evidence>
<evidence type="ECO:0000269" key="14">
    <source>
    </source>
</evidence>
<evidence type="ECO:0000269" key="15">
    <source>
    </source>
</evidence>
<evidence type="ECO:0000303" key="16">
    <source>
    </source>
</evidence>
<evidence type="ECO:0000303" key="17">
    <source>
    </source>
</evidence>
<evidence type="ECO:0000303" key="18">
    <source>
    </source>
</evidence>
<evidence type="ECO:0000303" key="19">
    <source ref="2"/>
</evidence>
<evidence type="ECO:0000305" key="20"/>
<evidence type="ECO:0000312" key="21">
    <source>
        <dbReference type="EMBL" id="AAH00031.2"/>
    </source>
</evidence>
<evidence type="ECO:0000312" key="22">
    <source>
        <dbReference type="EMBL" id="AAH16043.1"/>
    </source>
</evidence>
<evidence type="ECO:0000312" key="23">
    <source>
        <dbReference type="EMBL" id="AAH51844.1"/>
    </source>
</evidence>
<evidence type="ECO:0000312" key="24">
    <source>
        <dbReference type="EMBL" id="BAB70937.1"/>
    </source>
</evidence>
<evidence type="ECO:0007744" key="25">
    <source>
        <dbReference type="PDB" id="5WBL"/>
    </source>
</evidence>
<evidence type="ECO:0007744" key="26">
    <source>
        <dbReference type="PDB" id="5WBU"/>
    </source>
</evidence>
<evidence type="ECO:0007744" key="27">
    <source>
        <dbReference type="PDB" id="5WBY"/>
    </source>
</evidence>
<evidence type="ECO:0007744" key="28">
    <source>
        <dbReference type="PDB" id="6SB0"/>
    </source>
</evidence>
<evidence type="ECO:0007744" key="29">
    <source>
    </source>
</evidence>
<evidence type="ECO:0007744" key="30">
    <source>
    </source>
</evidence>
<evidence type="ECO:0007744" key="31">
    <source>
    </source>
</evidence>
<evidence type="ECO:0007744" key="32">
    <source>
    </source>
</evidence>
<evidence type="ECO:0007744" key="33">
    <source>
    </source>
</evidence>
<evidence type="ECO:0007744" key="34">
    <source>
    </source>
</evidence>
<evidence type="ECO:0007744" key="35">
    <source>
    </source>
</evidence>
<evidence type="ECO:0007744" key="36">
    <source>
    </source>
</evidence>
<evidence type="ECO:0007829" key="37">
    <source>
        <dbReference type="PDB" id="5WBU"/>
    </source>
</evidence>
<evidence type="ECO:0007829" key="38">
    <source>
        <dbReference type="PDB" id="5WBY"/>
    </source>
</evidence>
<gene>
    <name evidence="22" type="primary">AKT1S1</name>
    <name evidence="16 18" type="synonym">PRAS40</name>
</gene>
<accession>Q96B36</accession>
<accession>A8MTQ1</accession>
<accession>B2RE93</accession>
<accession>J3KPM3</accession>
<accession>Q96BI4</accession>
<accession>Q96IK7</accession>
<accession>Q96NG2</accession>
<accession>Q9BWR5</accession>
<name>AKTS1_HUMAN</name>
<reference evidence="20 24" key="1">
    <citation type="journal article" date="2004" name="Nat. Genet.">
        <title>Complete sequencing and characterization of 21,243 full-length human cDNAs.</title>
        <authorList>
            <person name="Ota T."/>
            <person name="Suzuki Y."/>
            <person name="Nishikawa T."/>
            <person name="Otsuki T."/>
            <person name="Sugiyama T."/>
            <person name="Irie R."/>
            <person name="Wakamatsu A."/>
            <person name="Hayashi K."/>
            <person name="Sato H."/>
            <person name="Nagai K."/>
            <person name="Kimura K."/>
            <person name="Makita H."/>
            <person name="Sekine M."/>
            <person name="Obayashi M."/>
            <person name="Nishi T."/>
            <person name="Shibahara T."/>
            <person name="Tanaka T."/>
            <person name="Ishii S."/>
            <person name="Yamamoto J."/>
            <person name="Saito K."/>
            <person name="Kawai Y."/>
            <person name="Isono Y."/>
            <person name="Nakamura Y."/>
            <person name="Nagahari K."/>
            <person name="Murakami K."/>
            <person name="Yasuda T."/>
            <person name="Iwayanagi T."/>
            <person name="Wagatsuma M."/>
            <person name="Shiratori A."/>
            <person name="Sudo H."/>
            <person name="Hosoiri T."/>
            <person name="Kaku Y."/>
            <person name="Kodaira H."/>
            <person name="Kondo H."/>
            <person name="Sugawara M."/>
            <person name="Takahashi M."/>
            <person name="Kanda K."/>
            <person name="Yokoi T."/>
            <person name="Furuya T."/>
            <person name="Kikkawa E."/>
            <person name="Omura Y."/>
            <person name="Abe K."/>
            <person name="Kamihara K."/>
            <person name="Katsuta N."/>
            <person name="Sato K."/>
            <person name="Tanikawa M."/>
            <person name="Yamazaki M."/>
            <person name="Ninomiya K."/>
            <person name="Ishibashi T."/>
            <person name="Yamashita H."/>
            <person name="Murakawa K."/>
            <person name="Fujimori K."/>
            <person name="Tanai H."/>
            <person name="Kimata M."/>
            <person name="Watanabe M."/>
            <person name="Hiraoka S."/>
            <person name="Chiba Y."/>
            <person name="Ishida S."/>
            <person name="Ono Y."/>
            <person name="Takiguchi S."/>
            <person name="Watanabe S."/>
            <person name="Yosida M."/>
            <person name="Hotuta T."/>
            <person name="Kusano J."/>
            <person name="Kanehori K."/>
            <person name="Takahashi-Fujii A."/>
            <person name="Hara H."/>
            <person name="Tanase T.-O."/>
            <person name="Nomura Y."/>
            <person name="Togiya S."/>
            <person name="Komai F."/>
            <person name="Hara R."/>
            <person name="Takeuchi K."/>
            <person name="Arita M."/>
            <person name="Imose N."/>
            <person name="Musashino K."/>
            <person name="Yuuki H."/>
            <person name="Oshima A."/>
            <person name="Sasaki N."/>
            <person name="Aotsuka S."/>
            <person name="Yoshikawa Y."/>
            <person name="Matsunawa H."/>
            <person name="Ichihara T."/>
            <person name="Shiohata N."/>
            <person name="Sano S."/>
            <person name="Moriya S."/>
            <person name="Momiyama H."/>
            <person name="Satoh N."/>
            <person name="Takami S."/>
            <person name="Terashima Y."/>
            <person name="Suzuki O."/>
            <person name="Nakagawa S."/>
            <person name="Senoh A."/>
            <person name="Mizoguchi H."/>
            <person name="Goto Y."/>
            <person name="Shimizu F."/>
            <person name="Wakebe H."/>
            <person name="Hishigaki H."/>
            <person name="Watanabe T."/>
            <person name="Sugiyama A."/>
            <person name="Takemoto M."/>
            <person name="Kawakami B."/>
            <person name="Yamazaki M."/>
            <person name="Watanabe K."/>
            <person name="Kumagai A."/>
            <person name="Itakura S."/>
            <person name="Fukuzumi Y."/>
            <person name="Fujimori Y."/>
            <person name="Komiyama M."/>
            <person name="Tashiro H."/>
            <person name="Tanigami A."/>
            <person name="Fujiwara T."/>
            <person name="Ono T."/>
            <person name="Yamada K."/>
            <person name="Fujii Y."/>
            <person name="Ozaki K."/>
            <person name="Hirao M."/>
            <person name="Ohmori Y."/>
            <person name="Kawabata A."/>
            <person name="Hikiji T."/>
            <person name="Kobatake N."/>
            <person name="Inagaki H."/>
            <person name="Ikema Y."/>
            <person name="Okamoto S."/>
            <person name="Okitani R."/>
            <person name="Kawakami T."/>
            <person name="Noguchi S."/>
            <person name="Itoh T."/>
            <person name="Shigeta K."/>
            <person name="Senba T."/>
            <person name="Matsumura K."/>
            <person name="Nakajima Y."/>
            <person name="Mizuno T."/>
            <person name="Morinaga M."/>
            <person name="Sasaki M."/>
            <person name="Togashi T."/>
            <person name="Oyama M."/>
            <person name="Hata H."/>
            <person name="Watanabe M."/>
            <person name="Komatsu T."/>
            <person name="Mizushima-Sugano J."/>
            <person name="Satoh T."/>
            <person name="Shirai Y."/>
            <person name="Takahashi Y."/>
            <person name="Nakagawa K."/>
            <person name="Okumura K."/>
            <person name="Nagase T."/>
            <person name="Nomura N."/>
            <person name="Kikuchi H."/>
            <person name="Masuho Y."/>
            <person name="Yamashita R."/>
            <person name="Nakai K."/>
            <person name="Yada T."/>
            <person name="Nakamura Y."/>
            <person name="Ohara O."/>
            <person name="Isogai T."/>
            <person name="Sugano S."/>
        </authorList>
    </citation>
    <scope>NUCLEOTIDE SEQUENCE [LARGE SCALE MRNA] (ISOFORM 1)</scope>
    <source>
        <tissue>Prostate</tissue>
        <tissue>Synovium</tissue>
    </source>
</reference>
<reference key="2">
    <citation type="submission" date="2006-07" db="EMBL/GenBank/DDBJ databases">
        <authorList>
            <person name="Totoki Y."/>
            <person name="Toyoda A."/>
            <person name="Takeda T."/>
            <person name="Sakaki Y."/>
            <person name="Tanaka A."/>
            <person name="Yokoyama S."/>
            <person name="Ohara O."/>
            <person name="Nagase T."/>
            <person name="Kikuno R.F."/>
        </authorList>
    </citation>
    <scope>NUCLEOTIDE SEQUENCE [LARGE SCALE MRNA] (ISOFORM 3)</scope>
    <source>
        <tissue>Coronary artery</tissue>
    </source>
</reference>
<reference key="3">
    <citation type="journal article" date="2004" name="Nature">
        <title>The DNA sequence and biology of human chromosome 19.</title>
        <authorList>
            <person name="Grimwood J."/>
            <person name="Gordon L.A."/>
            <person name="Olsen A.S."/>
            <person name="Terry A."/>
            <person name="Schmutz J."/>
            <person name="Lamerdin J.E."/>
            <person name="Hellsten U."/>
            <person name="Goodstein D."/>
            <person name="Couronne O."/>
            <person name="Tran-Gyamfi M."/>
            <person name="Aerts A."/>
            <person name="Altherr M."/>
            <person name="Ashworth L."/>
            <person name="Bajorek E."/>
            <person name="Black S."/>
            <person name="Branscomb E."/>
            <person name="Caenepeel S."/>
            <person name="Carrano A.V."/>
            <person name="Caoile C."/>
            <person name="Chan Y.M."/>
            <person name="Christensen M."/>
            <person name="Cleland C.A."/>
            <person name="Copeland A."/>
            <person name="Dalin E."/>
            <person name="Dehal P."/>
            <person name="Denys M."/>
            <person name="Detter J.C."/>
            <person name="Escobar J."/>
            <person name="Flowers D."/>
            <person name="Fotopulos D."/>
            <person name="Garcia C."/>
            <person name="Georgescu A.M."/>
            <person name="Glavina T."/>
            <person name="Gomez M."/>
            <person name="Gonzales E."/>
            <person name="Groza M."/>
            <person name="Hammon N."/>
            <person name="Hawkins T."/>
            <person name="Haydu L."/>
            <person name="Ho I."/>
            <person name="Huang W."/>
            <person name="Israni S."/>
            <person name="Jett J."/>
            <person name="Kadner K."/>
            <person name="Kimball H."/>
            <person name="Kobayashi A."/>
            <person name="Larionov V."/>
            <person name="Leem S.-H."/>
            <person name="Lopez F."/>
            <person name="Lou Y."/>
            <person name="Lowry S."/>
            <person name="Malfatti S."/>
            <person name="Martinez D."/>
            <person name="McCready P.M."/>
            <person name="Medina C."/>
            <person name="Morgan J."/>
            <person name="Nelson K."/>
            <person name="Nolan M."/>
            <person name="Ovcharenko I."/>
            <person name="Pitluck S."/>
            <person name="Pollard M."/>
            <person name="Popkie A.P."/>
            <person name="Predki P."/>
            <person name="Quan G."/>
            <person name="Ramirez L."/>
            <person name="Rash S."/>
            <person name="Retterer J."/>
            <person name="Rodriguez A."/>
            <person name="Rogers S."/>
            <person name="Salamov A."/>
            <person name="Salazar A."/>
            <person name="She X."/>
            <person name="Smith D."/>
            <person name="Slezak T."/>
            <person name="Solovyev V."/>
            <person name="Thayer N."/>
            <person name="Tice H."/>
            <person name="Tsai M."/>
            <person name="Ustaszewska A."/>
            <person name="Vo N."/>
            <person name="Wagner M."/>
            <person name="Wheeler J."/>
            <person name="Wu K."/>
            <person name="Xie G."/>
            <person name="Yang J."/>
            <person name="Dubchak I."/>
            <person name="Furey T.S."/>
            <person name="DeJong P."/>
            <person name="Dickson M."/>
            <person name="Gordon D."/>
            <person name="Eichler E.E."/>
            <person name="Pennacchio L.A."/>
            <person name="Richardson P."/>
            <person name="Stubbs L."/>
            <person name="Rokhsar D.S."/>
            <person name="Myers R.M."/>
            <person name="Rubin E.M."/>
            <person name="Lucas S.M."/>
        </authorList>
    </citation>
    <scope>NUCLEOTIDE SEQUENCE [LARGE SCALE GENOMIC DNA]</scope>
</reference>
<reference key="4">
    <citation type="submission" date="2005-07" db="EMBL/GenBank/DDBJ databases">
        <authorList>
            <person name="Mural R.J."/>
            <person name="Istrail S."/>
            <person name="Sutton G.G."/>
            <person name="Florea L."/>
            <person name="Halpern A.L."/>
            <person name="Mobarry C.M."/>
            <person name="Lippert R."/>
            <person name="Walenz B."/>
            <person name="Shatkay H."/>
            <person name="Dew I."/>
            <person name="Miller J.R."/>
            <person name="Flanigan M.J."/>
            <person name="Edwards N.J."/>
            <person name="Bolanos R."/>
            <person name="Fasulo D."/>
            <person name="Halldorsson B.V."/>
            <person name="Hannenhalli S."/>
            <person name="Turner R."/>
            <person name="Yooseph S."/>
            <person name="Lu F."/>
            <person name="Nusskern D.R."/>
            <person name="Shue B.C."/>
            <person name="Zheng X.H."/>
            <person name="Zhong F."/>
            <person name="Delcher A.L."/>
            <person name="Huson D.H."/>
            <person name="Kravitz S.A."/>
            <person name="Mouchard L."/>
            <person name="Reinert K."/>
            <person name="Remington K.A."/>
            <person name="Clark A.G."/>
            <person name="Waterman M.S."/>
            <person name="Eichler E.E."/>
            <person name="Adams M.D."/>
            <person name="Hunkapiller M.W."/>
            <person name="Myers E.W."/>
            <person name="Venter J.C."/>
        </authorList>
    </citation>
    <scope>NUCLEOTIDE SEQUENCE [LARGE SCALE GENOMIC DNA]</scope>
</reference>
<reference evidence="20 22" key="5">
    <citation type="journal article" date="2004" name="Genome Res.">
        <title>The status, quality, and expansion of the NIH full-length cDNA project: the Mammalian Gene Collection (MGC).</title>
        <authorList>
            <consortium name="The MGC Project Team"/>
        </authorList>
    </citation>
    <scope>NUCLEOTIDE SEQUENCE [LARGE SCALE MRNA] (ISOFORMS 1 AND 2)</scope>
    <scope>VARIANT PRO-47</scope>
    <source>
        <tissue evidence="21">Brain</tissue>
        <tissue evidence="22">Eye</tissue>
        <tissue evidence="23">Skin</tissue>
    </source>
</reference>
<reference evidence="20" key="6">
    <citation type="journal article" date="2003" name="J. Biol. Chem.">
        <title>Identification of a proline-rich Akt substrate as a 14-3-3 binding partner.</title>
        <authorList>
            <person name="Kovacina K.S."/>
            <person name="Park G.Y."/>
            <person name="Bae S.S."/>
            <person name="Guzzetta A.W."/>
            <person name="Schaefer E."/>
            <person name="Birnbaum M.J."/>
            <person name="Roth R.A."/>
        </authorList>
    </citation>
    <scope>INTERACTION WITH 14-3-3</scope>
    <scope>TISSUE SPECIFICITY</scope>
    <scope>PHOSPHORYLATION AT THR-246</scope>
</reference>
<reference evidence="20" key="7">
    <citation type="journal article" date="2005" name="Acta Pharmacol. Sin.">
        <title>Expression of proline-rich Akt-substrate PRAS40 in cell survival pathway and carcinogenesis.</title>
        <authorList>
            <person name="Huang B."/>
            <person name="Porter G."/>
        </authorList>
    </citation>
    <scope>FUNCTION</scope>
    <scope>TISSUE SPECIFICITY</scope>
</reference>
<reference key="8">
    <citation type="journal article" date="2006" name="Cell">
        <title>Global, in vivo, and site-specific phosphorylation dynamics in signaling networks.</title>
        <authorList>
            <person name="Olsen J.V."/>
            <person name="Blagoev B."/>
            <person name="Gnad F."/>
            <person name="Macek B."/>
            <person name="Kumar C."/>
            <person name="Mortensen P."/>
            <person name="Mann M."/>
        </authorList>
    </citation>
    <scope>PHOSPHORYLATION [LARGE SCALE ANALYSIS] AT SER-183</scope>
    <scope>IDENTIFICATION BY MASS SPECTROMETRY [LARGE SCALE ANALYSIS]</scope>
    <source>
        <tissue>Cervix carcinoma</tissue>
    </source>
</reference>
<reference key="9">
    <citation type="journal article" date="2007" name="J. Biol. Chem.">
        <title>PRAS40 regulates mTORC1 kinase activity by functioning as a direct inhibitor of substrate binding.</title>
        <authorList>
            <person name="Wang L."/>
            <person name="Harris T.E."/>
            <person name="Roth R.A."/>
            <person name="Lawrence J.C. Jr."/>
        </authorList>
    </citation>
    <scope>FUNCTION</scope>
    <scope>INTERACTION WITH RPTOR</scope>
    <scope>TOS MOTIF</scope>
    <scope>MUTAGENESIS OF PHE-129</scope>
</reference>
<reference key="10">
    <citation type="journal article" date="2007" name="J. Biol. Chem.">
        <title>The proline-rich Akt substrate of 40 kDa (PRAS40) is a physiological substrate of mammalian target of rapamycin complex 1.</title>
        <authorList>
            <person name="Oshiro N."/>
            <person name="Takahashi R."/>
            <person name="Yoshino K."/>
            <person name="Tanimura K."/>
            <person name="Nakashima A."/>
            <person name="Eguchi S."/>
            <person name="Miyamoto T."/>
            <person name="Hara K."/>
            <person name="Takehana K."/>
            <person name="Avruch J."/>
            <person name="Kikkawa U."/>
            <person name="Yonezawa K."/>
        </authorList>
    </citation>
    <scope>INTERACTION WITH RPTOR</scope>
    <scope>PHOSPHORYLATION AT SER-183</scope>
    <scope>MUTAGENESIS OF PHE-129 AND SER-183</scope>
</reference>
<reference key="11">
    <citation type="journal article" date="2007" name="Mol. Cell">
        <title>PRAS40 is an insulin-regulated inhibitor of the mTORC1 protein kinase.</title>
        <authorList>
            <person name="Sancak Y."/>
            <person name="Thoreen C.C."/>
            <person name="Peterson T.R."/>
            <person name="Lindquist R.A."/>
            <person name="Kang S.A."/>
            <person name="Spooner E."/>
            <person name="Carr S.A."/>
            <person name="Sabatini D.M."/>
        </authorList>
    </citation>
    <scope>FUNCTION</scope>
    <scope>IDENTIFICATION IN THE TORC1 COMPLEX</scope>
    <scope>INTERACTION WITH RPTOR</scope>
</reference>
<reference key="12">
    <citation type="journal article" date="2007" name="Nat. Cell Biol.">
        <title>Insulin signalling to mTOR mediated by the Akt/PKB substrate PRAS40.</title>
        <authorList>
            <person name="Vander Haar E."/>
            <person name="Lee S.-I."/>
            <person name="Bandhakavi S."/>
            <person name="Griffin T.J."/>
            <person name="Kim D.-H."/>
        </authorList>
    </citation>
    <scope>FUNCTION</scope>
    <scope>IDENTIFICATION IN THE TORC1 COMPLEX</scope>
    <scope>MUTAGENESIS OF THR-246</scope>
</reference>
<reference key="13">
    <citation type="journal article" date="2008" name="J. Biol. Chem.">
        <title>Regulation of proline-rich Akt substrate of 40 kDa (PRAS40) function by mammalian target of rapamycin complex 1 (mTORC1)-mediated phosphorylation.</title>
        <authorList>
            <person name="Wang L."/>
            <person name="Harris T.E."/>
            <person name="Lawrence J.C. Jr."/>
        </authorList>
    </citation>
    <scope>FUNCTION</scope>
    <scope>PHOSPHORYLATION AT SER-183; SER-212 AND SER-221</scope>
    <scope>MUTAGENESIS OF PHE-129; SER-183; SER-212 AND SER-221</scope>
</reference>
<reference key="14">
    <citation type="journal article" date="2008" name="Proc. Natl. Acad. Sci. U.S.A.">
        <title>A quantitative atlas of mitotic phosphorylation.</title>
        <authorList>
            <person name="Dephoure N."/>
            <person name="Zhou C."/>
            <person name="Villen J."/>
            <person name="Beausoleil S.A."/>
            <person name="Bakalarski C.E."/>
            <person name="Elledge S.J."/>
            <person name="Gygi S.P."/>
        </authorList>
    </citation>
    <scope>PHOSPHORYLATION [LARGE SCALE ANALYSIS] AT SER-88; SER-92; SER-183; SER-202; SER-203; SER-211; SER-212 AND THR-246</scope>
    <scope>IDENTIFICATION BY MASS SPECTROMETRY [LARGE SCALE ANALYSIS]</scope>
    <source>
        <tissue>Cervix carcinoma</tissue>
    </source>
</reference>
<reference key="15">
    <citation type="journal article" date="2009" name="Anal. Chem.">
        <title>Lys-N and trypsin cover complementary parts of the phosphoproteome in a refined SCX-based approach.</title>
        <authorList>
            <person name="Gauci S."/>
            <person name="Helbig A.O."/>
            <person name="Slijper M."/>
            <person name="Krijgsveld J."/>
            <person name="Heck A.J."/>
            <person name="Mohammed S."/>
        </authorList>
    </citation>
    <scope>IDENTIFICATION BY MASS SPECTROMETRY [LARGE SCALE ANALYSIS]</scope>
</reference>
<reference key="16">
    <citation type="journal article" date="2009" name="Sci. Signal.">
        <title>Quantitative phosphoproteomic analysis of T cell receptor signaling reveals system-wide modulation of protein-protein interactions.</title>
        <authorList>
            <person name="Mayya V."/>
            <person name="Lundgren D.H."/>
            <person name="Hwang S.-I."/>
            <person name="Rezaul K."/>
            <person name="Wu L."/>
            <person name="Eng J.K."/>
            <person name="Rodionov V."/>
            <person name="Han D.K."/>
        </authorList>
    </citation>
    <scope>PHOSPHORYLATION [LARGE SCALE ANALYSIS] AT SER-88; SER-92; SER-183; SER-202; SER-212 AND THR-246</scope>
    <scope>IDENTIFICATION BY MASS SPECTROMETRY [LARGE SCALE ANALYSIS]</scope>
    <source>
        <tissue>Leukemic T-cell</tissue>
    </source>
</reference>
<reference key="17">
    <citation type="journal article" date="2010" name="Sci. Signal.">
        <title>Quantitative phosphoproteomics reveals widespread full phosphorylation site occupancy during mitosis.</title>
        <authorList>
            <person name="Olsen J.V."/>
            <person name="Vermeulen M."/>
            <person name="Santamaria A."/>
            <person name="Kumar C."/>
            <person name="Miller M.L."/>
            <person name="Jensen L.J."/>
            <person name="Gnad F."/>
            <person name="Cox J."/>
            <person name="Jensen T.S."/>
            <person name="Nigg E.A."/>
            <person name="Brunak S."/>
            <person name="Mann M."/>
        </authorList>
    </citation>
    <scope>PHOSPHORYLATION [LARGE SCALE ANALYSIS] AT SER-183; SER-202; SER-203; SER-211; SER-212 AND THR-246</scope>
    <scope>IDENTIFICATION BY MASS SPECTROMETRY [LARGE SCALE ANALYSIS]</scope>
    <source>
        <tissue>Cervix carcinoma</tissue>
    </source>
</reference>
<reference key="18">
    <citation type="journal article" date="2011" name="BMC Syst. Biol.">
        <title>Initial characterization of the human central proteome.</title>
        <authorList>
            <person name="Burkard T.R."/>
            <person name="Planyavsky M."/>
            <person name="Kaupe I."/>
            <person name="Breitwieser F.P."/>
            <person name="Buerckstuemmer T."/>
            <person name="Bennett K.L."/>
            <person name="Superti-Furga G."/>
            <person name="Colinge J."/>
        </authorList>
    </citation>
    <scope>IDENTIFICATION BY MASS SPECTROMETRY [LARGE SCALE ANALYSIS]</scope>
</reference>
<reference key="19">
    <citation type="journal article" date="2011" name="Sci. Signal.">
        <title>System-wide temporal characterization of the proteome and phosphoproteome of human embryonic stem cell differentiation.</title>
        <authorList>
            <person name="Rigbolt K.T."/>
            <person name="Prokhorova T.A."/>
            <person name="Akimov V."/>
            <person name="Henningsen J."/>
            <person name="Johansen P.T."/>
            <person name="Kratchmarova I."/>
            <person name="Kassem M."/>
            <person name="Mann M."/>
            <person name="Olsen J.V."/>
            <person name="Blagoev B."/>
        </authorList>
    </citation>
    <scope>PHOSPHORYLATION [LARGE SCALE ANALYSIS] AT SER-88; SER-92; SER-183 AND THR-246</scope>
    <scope>IDENTIFICATION BY MASS SPECTROMETRY [LARGE SCALE ANALYSIS]</scope>
</reference>
<reference key="20">
    <citation type="journal article" date="2013" name="Cell">
        <title>Dual specificity kinase DYRK3 couples stress granule condensation/dissolution to mTORC1 signaling.</title>
        <authorList>
            <person name="Wippich F."/>
            <person name="Bodenmiller B."/>
            <person name="Trajkovska M.G."/>
            <person name="Wanka S."/>
            <person name="Aebersold R."/>
            <person name="Pelkmans L."/>
        </authorList>
    </citation>
    <scope>PHOSPHORYLATION AT THR-246</scope>
    <scope>MUTAGENESIS OF THR-246</scope>
</reference>
<reference key="21">
    <citation type="journal article" date="2013" name="J. Proteome Res.">
        <title>Toward a comprehensive characterization of a human cancer cell phosphoproteome.</title>
        <authorList>
            <person name="Zhou H."/>
            <person name="Di Palma S."/>
            <person name="Preisinger C."/>
            <person name="Peng M."/>
            <person name="Polat A.N."/>
            <person name="Heck A.J."/>
            <person name="Mohammed S."/>
        </authorList>
    </citation>
    <scope>PHOSPHORYLATION [LARGE SCALE ANALYSIS] AT SER-183; SER-203 AND SER-212</scope>
    <scope>IDENTIFICATION BY MASS SPECTROMETRY [LARGE SCALE ANALYSIS]</scope>
    <source>
        <tissue>Cervix carcinoma</tissue>
        <tissue>Erythroleukemia</tissue>
    </source>
</reference>
<reference key="22">
    <citation type="journal article" date="2014" name="J. Proteomics">
        <title>An enzyme assisted RP-RPLC approach for in-depth analysis of human liver phosphoproteome.</title>
        <authorList>
            <person name="Bian Y."/>
            <person name="Song C."/>
            <person name="Cheng K."/>
            <person name="Dong M."/>
            <person name="Wang F."/>
            <person name="Huang J."/>
            <person name="Sun D."/>
            <person name="Wang L."/>
            <person name="Ye M."/>
            <person name="Zou H."/>
        </authorList>
    </citation>
    <scope>PHOSPHORYLATION [LARGE SCALE ANALYSIS] AT SER-88; SER-92; SER-202 AND SER-203</scope>
    <scope>IDENTIFICATION BY MASS SPECTROMETRY [LARGE SCALE ANALYSIS]</scope>
    <source>
        <tissue>Liver</tissue>
    </source>
</reference>
<reference key="23">
    <citation type="journal article" date="2014" name="Mol. Cell. Proteomics">
        <title>Immunoaffinity enrichment and mass spectrometry analysis of protein methylation.</title>
        <authorList>
            <person name="Guo A."/>
            <person name="Gu H."/>
            <person name="Zhou J."/>
            <person name="Mulhern D."/>
            <person name="Wang Y."/>
            <person name="Lee K.A."/>
            <person name="Yang V."/>
            <person name="Aguiar M."/>
            <person name="Kornhauser J."/>
            <person name="Jia X."/>
            <person name="Ren J."/>
            <person name="Beausoleil S.A."/>
            <person name="Silva J.C."/>
            <person name="Vemulapalli V."/>
            <person name="Bedford M.T."/>
            <person name="Comb M.J."/>
        </authorList>
    </citation>
    <scope>METHYLATION [LARGE SCALE ANALYSIS] AT ARG-51</scope>
    <scope>IDENTIFICATION BY MASS SPECTROMETRY [LARGE SCALE ANALYSIS]</scope>
    <source>
        <tissue>Colon carcinoma</tissue>
    </source>
</reference>
<reference key="24">
    <citation type="journal article" date="2018" name="J. Mol. Biol.">
        <title>Crystal structure of human dual-specificity tyrosine-regulated kinase 3 reveals new structural features and insights into its auto-phosphorylation.</title>
        <authorList>
            <person name="Kim K."/>
            <person name="Cha J.S."/>
            <person name="Cho Y.S."/>
            <person name="Kim H."/>
            <person name="Chang N."/>
            <person name="Kim H.J."/>
            <person name="Cho H.S."/>
        </authorList>
    </citation>
    <scope>PHOSPHORYLATION AT THR-246</scope>
</reference>
<reference evidence="25 26 27" key="25">
    <citation type="journal article" date="2017" name="Nature">
        <title>Mechanisms of mTORC1 activation by RHEB and inhibition by PRAS40.</title>
        <authorList>
            <person name="Yang H."/>
            <person name="Jiang X."/>
            <person name="Li B."/>
            <person name="Yang H.J."/>
            <person name="Miller M."/>
            <person name="Yang A."/>
            <person name="Dhar A."/>
            <person name="Pavletich N.P."/>
        </authorList>
    </citation>
    <scope>X-RAY CRYSTALLOGRAPHY (3.10 ANGSTROMS) OF 114-207 IN COMPLEX WITH MTOR AND MLST8</scope>
    <scope>FUNCTION</scope>
    <scope>IDENTIFICATION IN THE MTORC1 COMPLEX</scope>
    <scope>MUTAGENESIS OF 215-LEU--LEU-225</scope>
</reference>
<reference evidence="28" key="26">
    <citation type="journal article" date="2019" name="Science">
        <title>Architecture of human Rag GTPase heterodimers and their complex with mTORC1.</title>
        <authorList>
            <person name="Anandapadamanaban M."/>
            <person name="Masson G.R."/>
            <person name="Perisic O."/>
            <person name="Berndt A."/>
            <person name="Kaufman J."/>
            <person name="Johnson C.M."/>
            <person name="Santhanam B."/>
            <person name="Rogala K.B."/>
            <person name="Sabatini D.M."/>
            <person name="Williams R.L."/>
        </authorList>
    </citation>
    <scope>STRUCTURE BY ELECTRON MICROSCOPY (5.50 ANGSTROMS) IN COMPLEX WITH RRAGA; RRAGC; RPTOR; MLST8 AND MTOR</scope>
    <scope>IDENTIFICATION IN THE MTORC1 COMPLEX</scope>
</reference>
<dbReference type="EMBL" id="AK055511">
    <property type="protein sequence ID" value="BAB70937.1"/>
    <property type="molecule type" value="mRNA"/>
</dbReference>
<dbReference type="EMBL" id="AK092610">
    <property type="protein sequence ID" value="BAG52583.1"/>
    <property type="molecule type" value="mRNA"/>
</dbReference>
<dbReference type="EMBL" id="AK316603">
    <property type="protein sequence ID" value="BAG38190.1"/>
    <property type="molecule type" value="mRNA"/>
</dbReference>
<dbReference type="EMBL" id="AK226004">
    <property type="status" value="NOT_ANNOTATED_CDS"/>
    <property type="molecule type" value="mRNA"/>
</dbReference>
<dbReference type="EMBL" id="AC118341">
    <property type="status" value="NOT_ANNOTATED_CDS"/>
    <property type="molecule type" value="Genomic_DNA"/>
</dbReference>
<dbReference type="EMBL" id="CH471177">
    <property type="protein sequence ID" value="EAW52570.1"/>
    <property type="molecule type" value="Genomic_DNA"/>
</dbReference>
<dbReference type="EMBL" id="CH471177">
    <property type="protein sequence ID" value="EAW52568.1"/>
    <property type="molecule type" value="Genomic_DNA"/>
</dbReference>
<dbReference type="EMBL" id="BC000031">
    <property type="protein sequence ID" value="AAH00031.2"/>
    <property type="status" value="ALT_INIT"/>
    <property type="molecule type" value="mRNA"/>
</dbReference>
<dbReference type="EMBL" id="BC007416">
    <property type="protein sequence ID" value="AAH07416.1"/>
    <property type="molecule type" value="mRNA"/>
</dbReference>
<dbReference type="EMBL" id="BC015562">
    <property type="protein sequence ID" value="AAH15562.1"/>
    <property type="molecule type" value="mRNA"/>
</dbReference>
<dbReference type="EMBL" id="BC016043">
    <property type="protein sequence ID" value="AAH16043.1"/>
    <property type="molecule type" value="mRNA"/>
</dbReference>
<dbReference type="EMBL" id="BC051844">
    <property type="protein sequence ID" value="AAH51844.1"/>
    <property type="molecule type" value="mRNA"/>
</dbReference>
<dbReference type="CCDS" id="CCDS12784.1">
    <molecule id="Q96B36-1"/>
</dbReference>
<dbReference type="CCDS" id="CCDS59410.1">
    <molecule id="Q96B36-3"/>
</dbReference>
<dbReference type="RefSeq" id="NP_001092102.1">
    <molecule id="Q96B36-1"/>
    <property type="nucleotide sequence ID" value="NM_001098632.2"/>
</dbReference>
<dbReference type="RefSeq" id="NP_001092103.1">
    <molecule id="Q96B36-1"/>
    <property type="nucleotide sequence ID" value="NM_001098633.4"/>
</dbReference>
<dbReference type="RefSeq" id="NP_001265088.1">
    <molecule id="Q96B36-1"/>
    <property type="nucleotide sequence ID" value="NM_001278159.2"/>
</dbReference>
<dbReference type="RefSeq" id="NP_001265089.1">
    <molecule id="Q96B36-1"/>
    <property type="nucleotide sequence ID" value="NM_001278160.2"/>
</dbReference>
<dbReference type="RefSeq" id="NP_115751.3">
    <molecule id="Q96B36-3"/>
    <property type="nucleotide sequence ID" value="NM_032375.5"/>
</dbReference>
<dbReference type="PDB" id="5WBL">
    <property type="method" value="X-ray"/>
    <property type="resolution" value="3.35 A"/>
    <property type="chains" value="T=124-139"/>
</dbReference>
<dbReference type="PDB" id="5WBU">
    <property type="method" value="X-ray"/>
    <property type="resolution" value="3.42 A"/>
    <property type="chains" value="O/P/Q/R=173-256"/>
</dbReference>
<dbReference type="PDB" id="5WBY">
    <property type="method" value="X-ray"/>
    <property type="resolution" value="3.10 A"/>
    <property type="chains" value="O/P=114-207"/>
</dbReference>
<dbReference type="PDB" id="6SB0">
    <property type="method" value="EM"/>
    <property type="resolution" value="5.50 A"/>
    <property type="chains" value="O/T=1-256"/>
</dbReference>
<dbReference type="PDBsum" id="5WBL"/>
<dbReference type="PDBsum" id="5WBU"/>
<dbReference type="PDBsum" id="5WBY"/>
<dbReference type="PDBsum" id="6SB0"/>
<dbReference type="EMDB" id="EMD-10132"/>
<dbReference type="SMR" id="Q96B36"/>
<dbReference type="BioGRID" id="124059">
    <property type="interactions" value="36"/>
</dbReference>
<dbReference type="CORUM" id="Q96B36"/>
<dbReference type="FunCoup" id="Q96B36">
    <property type="interactions" value="1290"/>
</dbReference>
<dbReference type="IntAct" id="Q96B36">
    <property type="interactions" value="20"/>
</dbReference>
<dbReference type="MINT" id="Q96B36"/>
<dbReference type="STRING" id="9606.ENSP00000375711"/>
<dbReference type="BindingDB" id="Q96B36"/>
<dbReference type="ChEMBL" id="CHEMBL1255161"/>
<dbReference type="GlyGen" id="Q96B36">
    <property type="glycosylation" value="3 sites, 1 N-linked glycan (1 site), 1 O-linked glycan (1 site)"/>
</dbReference>
<dbReference type="iPTMnet" id="Q96B36"/>
<dbReference type="PhosphoSitePlus" id="Q96B36"/>
<dbReference type="BioMuta" id="AKT1S1"/>
<dbReference type="DMDM" id="74731194"/>
<dbReference type="CPTAC" id="CPTAC-1038"/>
<dbReference type="CPTAC" id="CPTAC-785"/>
<dbReference type="CPTAC" id="CPTAC-787"/>
<dbReference type="CPTAC" id="non-CPTAC-5333"/>
<dbReference type="CPTAC" id="non-CPTAC-5698"/>
<dbReference type="jPOST" id="Q96B36"/>
<dbReference type="MassIVE" id="Q96B36"/>
<dbReference type="PaxDb" id="9606-ENSP00000375711"/>
<dbReference type="PeptideAtlas" id="Q96B36"/>
<dbReference type="ProteomicsDB" id="76040">
    <molecule id="Q96B36-1"/>
</dbReference>
<dbReference type="ProteomicsDB" id="76041">
    <molecule id="Q96B36-2"/>
</dbReference>
<dbReference type="Pumba" id="Q96B36"/>
<dbReference type="Antibodypedia" id="32195">
    <property type="antibodies" value="588 antibodies from 40 providers"/>
</dbReference>
<dbReference type="DNASU" id="84335"/>
<dbReference type="Ensembl" id="ENST00000344175.10">
    <molecule id="Q96B36-1"/>
    <property type="protein sequence ID" value="ENSP00000341698.5"/>
    <property type="gene ID" value="ENSG00000204673.11"/>
</dbReference>
<dbReference type="Ensembl" id="ENST00000391831.5">
    <molecule id="Q96B36-1"/>
    <property type="protein sequence ID" value="ENSP00000375707.1"/>
    <property type="gene ID" value="ENSG00000204673.11"/>
</dbReference>
<dbReference type="Ensembl" id="ENST00000391832.7">
    <molecule id="Q96B36-1"/>
    <property type="protein sequence ID" value="ENSP00000375708.3"/>
    <property type="gene ID" value="ENSG00000204673.11"/>
</dbReference>
<dbReference type="Ensembl" id="ENST00000391833.5">
    <molecule id="Q96B36-1"/>
    <property type="protein sequence ID" value="ENSP00000375709.1"/>
    <property type="gene ID" value="ENSG00000204673.11"/>
</dbReference>
<dbReference type="Ensembl" id="ENST00000391834.6">
    <molecule id="Q96B36-1"/>
    <property type="protein sequence ID" value="ENSP00000375710.2"/>
    <property type="gene ID" value="ENSG00000204673.11"/>
</dbReference>
<dbReference type="Ensembl" id="ENST00000391835.1">
    <molecule id="Q96B36-3"/>
    <property type="protein sequence ID" value="ENSP00000375711.1"/>
    <property type="gene ID" value="ENSG00000204673.11"/>
</dbReference>
<dbReference type="GeneID" id="84335"/>
<dbReference type="KEGG" id="hsa:84335"/>
<dbReference type="MANE-Select" id="ENST00000344175.10">
    <property type="protein sequence ID" value="ENSP00000341698.5"/>
    <property type="RefSeq nucleotide sequence ID" value="NM_001098633.4"/>
    <property type="RefSeq protein sequence ID" value="NP_001092103.1"/>
</dbReference>
<dbReference type="UCSC" id="uc002pql.6">
    <molecule id="Q96B36-1"/>
    <property type="organism name" value="human"/>
</dbReference>
<dbReference type="AGR" id="HGNC:28426"/>
<dbReference type="CTD" id="84335"/>
<dbReference type="DisGeNET" id="84335"/>
<dbReference type="GeneCards" id="AKT1S1"/>
<dbReference type="HGNC" id="HGNC:28426">
    <property type="gene designation" value="AKT1S1"/>
</dbReference>
<dbReference type="HPA" id="ENSG00000204673">
    <property type="expression patterns" value="Low tissue specificity"/>
</dbReference>
<dbReference type="MIM" id="610221">
    <property type="type" value="gene"/>
</dbReference>
<dbReference type="neXtProt" id="NX_Q96B36"/>
<dbReference type="OpenTargets" id="ENSG00000204673"/>
<dbReference type="PharmGKB" id="PA134943587"/>
<dbReference type="VEuPathDB" id="HostDB:ENSG00000204673"/>
<dbReference type="eggNOG" id="ENOG502RY6G">
    <property type="taxonomic scope" value="Eukaryota"/>
</dbReference>
<dbReference type="GeneTree" id="ENSGT00390000017397"/>
<dbReference type="HOGENOM" id="CLU_067112_0_0_1"/>
<dbReference type="InParanoid" id="Q96B36"/>
<dbReference type="OrthoDB" id="9992964at2759"/>
<dbReference type="PAN-GO" id="Q96B36">
    <property type="GO annotations" value="3 GO annotations based on evolutionary models"/>
</dbReference>
<dbReference type="PhylomeDB" id="Q96B36"/>
<dbReference type="PathwayCommons" id="Q96B36"/>
<dbReference type="Reactome" id="R-HSA-165159">
    <property type="pathway name" value="MTOR signalling"/>
</dbReference>
<dbReference type="Reactome" id="R-HSA-166208">
    <property type="pathway name" value="mTORC1-mediated signalling"/>
</dbReference>
<dbReference type="Reactome" id="R-HSA-198323">
    <property type="pathway name" value="AKT phosphorylates targets in the cytosol"/>
</dbReference>
<dbReference type="Reactome" id="R-HSA-3371571">
    <property type="pathway name" value="HSF1-dependent transactivation"/>
</dbReference>
<dbReference type="Reactome" id="R-HSA-5674400">
    <property type="pathway name" value="Constitutive Signaling by AKT1 E17K in Cancer"/>
</dbReference>
<dbReference type="SABIO-RK" id="Q96B36"/>
<dbReference type="SignaLink" id="Q96B36"/>
<dbReference type="SIGNOR" id="Q96B36"/>
<dbReference type="BioGRID-ORCS" id="84335">
    <property type="hits" value="23 hits in 1163 CRISPR screens"/>
</dbReference>
<dbReference type="ChiTaRS" id="AKT1S1">
    <property type="organism name" value="human"/>
</dbReference>
<dbReference type="GeneWiki" id="AKT1S1"/>
<dbReference type="GenomeRNAi" id="84335"/>
<dbReference type="Pharos" id="Q96B36">
    <property type="development level" value="Tchem"/>
</dbReference>
<dbReference type="PRO" id="PR:Q96B36"/>
<dbReference type="Proteomes" id="UP000005640">
    <property type="component" value="Chromosome 19"/>
</dbReference>
<dbReference type="RNAct" id="Q96B36">
    <property type="molecule type" value="protein"/>
</dbReference>
<dbReference type="Bgee" id="ENSG00000204673">
    <property type="expression patterns" value="Expressed in gastrocnemius and 155 other cell types or tissues"/>
</dbReference>
<dbReference type="ExpressionAtlas" id="Q96B36">
    <property type="expression patterns" value="baseline and differential"/>
</dbReference>
<dbReference type="GO" id="GO:0005737">
    <property type="term" value="C:cytoplasm"/>
    <property type="evidence" value="ECO:0000318"/>
    <property type="project" value="GO_Central"/>
</dbReference>
<dbReference type="GO" id="GO:0005829">
    <property type="term" value="C:cytosol"/>
    <property type="evidence" value="ECO:0000314"/>
    <property type="project" value="HPA"/>
</dbReference>
<dbReference type="GO" id="GO:0005654">
    <property type="term" value="C:nucleoplasm"/>
    <property type="evidence" value="ECO:0000304"/>
    <property type="project" value="Reactome"/>
</dbReference>
<dbReference type="GO" id="GO:0031931">
    <property type="term" value="C:TORC1 complex"/>
    <property type="evidence" value="ECO:0000314"/>
    <property type="project" value="UniProtKB"/>
</dbReference>
<dbReference type="GO" id="GO:0004860">
    <property type="term" value="F:protein kinase inhibitor activity"/>
    <property type="evidence" value="ECO:0000314"/>
    <property type="project" value="UniProtKB"/>
</dbReference>
<dbReference type="GO" id="GO:0030291">
    <property type="term" value="F:protein serine/threonine kinase inhibitor activity"/>
    <property type="evidence" value="ECO:0000314"/>
    <property type="project" value="UniProtKB"/>
</dbReference>
<dbReference type="GO" id="GO:0045792">
    <property type="term" value="P:negative regulation of cell size"/>
    <property type="evidence" value="ECO:0000314"/>
    <property type="project" value="UniProtKB"/>
</dbReference>
<dbReference type="GO" id="GO:0006469">
    <property type="term" value="P:negative regulation of protein kinase activity"/>
    <property type="evidence" value="ECO:0000314"/>
    <property type="project" value="UniProtKB"/>
</dbReference>
<dbReference type="GO" id="GO:0032007">
    <property type="term" value="P:negative regulation of TOR signaling"/>
    <property type="evidence" value="ECO:0000314"/>
    <property type="project" value="UniProtKB"/>
</dbReference>
<dbReference type="GO" id="GO:1904262">
    <property type="term" value="P:negative regulation of TORC1 signaling"/>
    <property type="evidence" value="ECO:0000314"/>
    <property type="project" value="UniProtKB"/>
</dbReference>
<dbReference type="GO" id="GO:0048011">
    <property type="term" value="P:neurotrophin TRK receptor signaling pathway"/>
    <property type="evidence" value="ECO:0007669"/>
    <property type="project" value="InterPro"/>
</dbReference>
<dbReference type="GO" id="GO:0042981">
    <property type="term" value="P:regulation of apoptotic process"/>
    <property type="evidence" value="ECO:0000250"/>
    <property type="project" value="UniProtKB"/>
</dbReference>
<dbReference type="GO" id="GO:0043523">
    <property type="term" value="P:regulation of neuron apoptotic process"/>
    <property type="evidence" value="ECO:0000250"/>
    <property type="project" value="UniProtKB"/>
</dbReference>
<dbReference type="InterPro" id="IPR026682">
    <property type="entry name" value="AKT1S1"/>
</dbReference>
<dbReference type="InterPro" id="IPR055192">
    <property type="entry name" value="PRAS_NT"/>
</dbReference>
<dbReference type="PANTHER" id="PTHR21844">
    <property type="entry name" value="AKT1 SUBSTRATE 1 PROTEIN"/>
    <property type="match status" value="1"/>
</dbReference>
<dbReference type="PANTHER" id="PTHR21844:SF2">
    <property type="entry name" value="PROLINE-RICH AKT1 SUBSTRATE 1"/>
    <property type="match status" value="1"/>
</dbReference>
<dbReference type="Pfam" id="PF15798">
    <property type="entry name" value="PRAS"/>
    <property type="match status" value="1"/>
</dbReference>
<dbReference type="Pfam" id="PF22911">
    <property type="entry name" value="PRAS_NT"/>
    <property type="match status" value="1"/>
</dbReference>
<proteinExistence type="evidence at protein level"/>
<feature type="chain" id="PRO_0000253446" description="Proline-rich AKT1 substrate 1">
    <location>
        <begin position="1"/>
        <end position="256"/>
    </location>
</feature>
<feature type="region of interest" description="Disordered" evidence="2">
    <location>
        <begin position="69"/>
        <end position="189"/>
    </location>
</feature>
<feature type="region of interest" description="Disordered" evidence="2">
    <location>
        <begin position="197"/>
        <end position="216"/>
    </location>
</feature>
<feature type="region of interest" description="Disordered" evidence="2">
    <location>
        <begin position="237"/>
        <end position="256"/>
    </location>
</feature>
<feature type="short sequence motif" description="TOS motif" evidence="9">
    <location>
        <begin position="129"/>
        <end position="133"/>
    </location>
</feature>
<feature type="compositionally biased region" description="Pro residues" evidence="2">
    <location>
        <begin position="77"/>
        <end position="96"/>
    </location>
</feature>
<feature type="compositionally biased region" description="Acidic residues" evidence="2">
    <location>
        <begin position="102"/>
        <end position="112"/>
    </location>
</feature>
<feature type="compositionally biased region" description="Acidic residues" evidence="2">
    <location>
        <begin position="146"/>
        <end position="156"/>
    </location>
</feature>
<feature type="modified residue" description="Omega-N-methylarginine" evidence="35">
    <location>
        <position position="51"/>
    </location>
</feature>
<feature type="modified residue" description="Phosphoserine" evidence="30 31 33 36">
    <location>
        <position position="88"/>
    </location>
</feature>
<feature type="modified residue" description="Phosphoserine" evidence="30 31 33 36">
    <location>
        <position position="92"/>
    </location>
</feature>
<feature type="modified residue" description="Phosphoserine" evidence="1">
    <location>
        <position position="116"/>
    </location>
</feature>
<feature type="modified residue" description="Phosphoserine; by MTOR" evidence="10 11 29 30 31 32 33 34">
    <location>
        <position position="183"/>
    </location>
</feature>
<feature type="modified residue" description="Phosphoserine" evidence="30 31 32 36">
    <location>
        <position position="202"/>
    </location>
</feature>
<feature type="modified residue" description="Phosphoserine" evidence="30 32 34 36">
    <location>
        <position position="203"/>
    </location>
</feature>
<feature type="modified residue" description="Phosphoserine" evidence="30 32">
    <location>
        <position position="211"/>
    </location>
</feature>
<feature type="modified residue" description="Phosphoserine; by MTOR" evidence="11 30 31 32 34">
    <location>
        <position position="212"/>
    </location>
</feature>
<feature type="modified residue" description="Phosphoserine; by MTOR" evidence="11">
    <location>
        <position position="221"/>
    </location>
</feature>
<feature type="modified residue" description="Phosphothreonine; by PKB/AKT1 and DYRK3" evidence="3 12 14 30 31 32 33">
    <location>
        <position position="246"/>
    </location>
</feature>
<feature type="splice variant" id="VSP_052182" description="In isoform 2." evidence="17">
    <location>
        <begin position="1"/>
        <end position="130"/>
    </location>
</feature>
<feature type="splice variant" id="VSP_047536" description="In isoform 3." evidence="19">
    <original>M</original>
    <variation>MSFEGGDGAGPAMLATGTARM</variation>
    <location>
        <position position="1"/>
    </location>
</feature>
<feature type="sequence variant" id="VAR_028239" description="In dbSNP:rs17850191." evidence="5">
    <original>A</original>
    <variation>P</variation>
    <location>
        <position position="47"/>
    </location>
</feature>
<feature type="mutagenesis site" description="Abolished association with the MTORC1 complex. Does not affect phosphorylation by MTOR." evidence="9 10 11">
    <original>F</original>
    <variation>A</variation>
    <location>
        <position position="129"/>
    </location>
</feature>
<feature type="mutagenesis site" description="Reduced phosphorylation by MTOR." evidence="10 11">
    <original>S</original>
    <variation>A</variation>
    <location>
        <position position="183"/>
    </location>
</feature>
<feature type="mutagenesis site" description="Mimics phosphorylation; reduced interaction with RPTOR." evidence="10">
    <original>S</original>
    <variation>D</variation>
    <location>
        <position position="183"/>
    </location>
</feature>
<feature type="mutagenesis site" description="Does not affect phosphorylation by MTOR." evidence="11">
    <original>S</original>
    <variation>A</variation>
    <location>
        <position position="212"/>
    </location>
</feature>
<feature type="mutagenesis site" description="Abolished ability to inhibit the kinase activity of MTOR." evidence="13">
    <original>LDRIAASMRAL</original>
    <variation>ADRAAGSARAA</variation>
    <location>
        <begin position="215"/>
        <end position="225"/>
    </location>
</feature>
<feature type="mutagenesis site" description="Decreased interaction with 14-3-3; increased inhibitory activity toward mTORC1." evidence="11">
    <original>S</original>
    <variation>A</variation>
    <location>
        <position position="221"/>
    </location>
</feature>
<feature type="mutagenesis site" description="Suppresses RPS6KB1 phosphorylation by mTORC1." evidence="7 12">
    <original>T</original>
    <variation>A</variation>
    <location>
        <position position="246"/>
    </location>
</feature>
<feature type="sequence conflict" description="In Ref. 1; BAB70937." evidence="20" ref="1">
    <original>D</original>
    <variation>G</variation>
    <location>
        <position position="108"/>
    </location>
</feature>
<feature type="sequence conflict" description="In Ref. 1; BAB70937." evidence="20" ref="1">
    <original>K</original>
    <variation>M</variation>
    <location>
        <position position="196"/>
    </location>
</feature>
<feature type="sequence conflict" description="In Ref. 1; BAB70937." evidence="20" ref="1">
    <original>T</original>
    <variation>A</variation>
    <location>
        <position position="233"/>
    </location>
</feature>
<feature type="strand" evidence="38">
    <location>
        <begin position="190"/>
        <end position="192"/>
    </location>
</feature>
<feature type="helix" evidence="37">
    <location>
        <begin position="213"/>
        <end position="231"/>
    </location>
</feature>
<keyword id="KW-0002">3D-structure</keyword>
<keyword id="KW-0025">Alternative splicing</keyword>
<keyword id="KW-0963">Cytoplasm</keyword>
<keyword id="KW-0488">Methylation</keyword>
<keyword id="KW-0597">Phosphoprotein</keyword>
<keyword id="KW-1267">Proteomics identification</keyword>
<keyword id="KW-1185">Reference proteome</keyword>
<organism>
    <name type="scientific">Homo sapiens</name>
    <name type="common">Human</name>
    <dbReference type="NCBI Taxonomy" id="9606"/>
    <lineage>
        <taxon>Eukaryota</taxon>
        <taxon>Metazoa</taxon>
        <taxon>Chordata</taxon>
        <taxon>Craniata</taxon>
        <taxon>Vertebrata</taxon>
        <taxon>Euteleostomi</taxon>
        <taxon>Mammalia</taxon>
        <taxon>Eutheria</taxon>
        <taxon>Euarchontoglires</taxon>
        <taxon>Primates</taxon>
        <taxon>Haplorrhini</taxon>
        <taxon>Catarrhini</taxon>
        <taxon>Hominidae</taxon>
        <taxon>Homo</taxon>
    </lineage>
</organism>
<protein>
    <recommendedName>
        <fullName>Proline-rich AKT1 substrate 1</fullName>
    </recommendedName>
    <alternativeName>
        <fullName>40 kDa proline-rich AKT substrate</fullName>
    </alternativeName>
</protein>
<comment type="function">
    <text evidence="1 6 7 8 9 11 13">Negative regulator of the mechanistic target of rapamycin complex 1 (mTORC1), an evolutionarily conserved central nutrient sensor that stimulates anabolic reactions and macromolecule biosynthesis to promote cellular biomass generation and growth (PubMed:17277771, PubMed:17386266, PubMed:17510057, PubMed:29236692). In absence of insulin and nutrients, AKT1S1 associates with the mTORC1 complex and directly inhibits mTORC1 activity by blocking the MTOR substrate-recruitment site (PubMed:29236692). In response to insulin and nutrients, AKT1S1 dissociates from mTORC1 (PubMed:17386266, PubMed:18372248). Its activity is dependent on its phosphorylation state and binding to 14-3-3 (PubMed:16174443, PubMed:18372248). May also play a role in nerve growth factor-mediated neuroprotection (By similarity).</text>
</comment>
<comment type="subunit">
    <text evidence="3 7 8 9 10 11 13 15">Associated component of the mechanistic target of rapamycin complex 1 (mTORC1), which contains core MTOR, MLST8 and RPTOR (PubMed:17277771, PubMed:17386266, PubMed:17510057, PubMed:29236692, PubMed:31601764). Dissociates from mTORC1 in response to insulin treatment (PubMed:17386266, PubMed:18372248). mTORC1 binds to and is inhibited by FKBP12-rapamycin (PubMed:17277771, PubMed:31601764). Interacts (via TOS motif) with RPTOR; interaction is direct (PubMed:17386266, PubMed:17510057, PubMed:17517883). The phosphorylated form interacts with 14-3-3 proteins (PubMed:12524439, PubMed:18372248).</text>
</comment>
<comment type="interaction">
    <interactant intactId="EBI-720593">
        <id>Q96B36</id>
    </interactant>
    <interactant intactId="EBI-359815">
        <id>P31946</id>
        <label>YWHAB</label>
    </interactant>
    <organismsDiffer>false</organismsDiffer>
    <experiments>4</experiments>
</comment>
<comment type="interaction">
    <interactant intactId="EBI-720593">
        <id>Q96B36</id>
    </interactant>
    <interactant intactId="EBI-306940">
        <id>Q04917</id>
        <label>YWHAH</label>
    </interactant>
    <organismsDiffer>false</organismsDiffer>
    <experiments>7</experiments>
</comment>
<comment type="interaction">
    <interactant intactId="EBI-720593">
        <id>Q96B36</id>
    </interactant>
    <interactant intactId="EBI-347088">
        <id>P63104</id>
        <label>YWHAZ</label>
    </interactant>
    <organismsDiffer>false</organismsDiffer>
    <experiments>2</experiments>
</comment>
<comment type="interaction">
    <interactant intactId="EBI-720593">
        <id>Q96B36</id>
    </interactant>
    <interactant intactId="EBI-3661">
        <id>P29311</id>
        <label>BMH1</label>
    </interactant>
    <organismsDiffer>true</organismsDiffer>
    <experiments>3</experiments>
</comment>
<comment type="subcellular location">
    <subcellularLocation>
        <location evidence="1">Cytoplasm</location>
        <location evidence="1">Cytosol</location>
    </subcellularLocation>
    <text evidence="1">Found in the cytosolic fraction of the brain.</text>
</comment>
<comment type="alternative products">
    <event type="alternative splicing"/>
    <isoform>
        <id>Q96B36-1</id>
        <name evidence="4 5">1</name>
        <sequence type="displayed"/>
    </isoform>
    <isoform>
        <id>Q96B36-2</id>
        <name evidence="5">2</name>
        <sequence type="described" ref="VSP_052182"/>
    </isoform>
    <isoform>
        <id>Q96B36-3</id>
        <name>3</name>
        <sequence type="described" ref="VSP_047536"/>
    </isoform>
</comment>
<comment type="tissue specificity">
    <text evidence="3 6">Widely expressed with highest levels of expression in liver and heart. Expressed at higher levels in cancer cell lines (e.g. A-549 and HeLa) than in normal cell lines (e.g. HEK293).</text>
</comment>
<comment type="domain">
    <text evidence="9 10">The TOS motif mediates interaction with RPTOR, leading to promote phosphorylation by mTORC1 complex.</text>
</comment>
<comment type="PTM">
    <text evidence="3 8 10 12">Phosphorylated by AKT1; phosphorylation takes place in response to insulin treatment and promotes AKT1S1 interaction with 14-3-3 proteins, leading to relieve its inhibitor activity (PubMed:12524439, PubMed:17386266). Phosphorylated by MTOR following mTORC1 activation, inhibiting AKT1S1 inhibitor activity: phosphorylation by MTOR probably serves as a feedback loop that relieves inhibition from AKT1S1 in response to mTORC1 inactivation (PubMed:17517883). Phosphorylation at Thr-246 by DYRK3 relieves inhibitory function on mTORC1 (PubMed:23415227).</text>
</comment>
<comment type="sequence caution" evidence="20">
    <conflict type="erroneous initiation">
        <sequence resource="EMBL-CDS" id="AAH00031"/>
    </conflict>
</comment>